<keyword id="KW-0053">Apoptosis</keyword>
<keyword id="KW-0121">Carboxypeptidase</keyword>
<keyword id="KW-0325">Glycoprotein</keyword>
<keyword id="KW-0333">Golgi apparatus</keyword>
<keyword id="KW-0378">Hydrolase</keyword>
<keyword id="KW-0472">Membrane</keyword>
<keyword id="KW-0645">Protease</keyword>
<keyword id="KW-0732">Signal</keyword>
<keyword id="KW-0812">Transmembrane</keyword>
<keyword id="KW-1133">Transmembrane helix</keyword>
<dbReference type="EC" id="3.4.16.6"/>
<dbReference type="EMBL" id="KN305543">
    <property type="protein sequence ID" value="EEH16532.1"/>
    <property type="molecule type" value="Genomic_DNA"/>
</dbReference>
<dbReference type="SMR" id="C0SGJ2"/>
<dbReference type="ESTHER" id="parbp-kex1">
    <property type="family name" value="Carboxypeptidase_S10"/>
</dbReference>
<dbReference type="MEROPS" id="S10.007"/>
<dbReference type="GlyCosmos" id="C0SGJ2">
    <property type="glycosylation" value="4 sites, No reported glycans"/>
</dbReference>
<dbReference type="VEuPathDB" id="FungiDB:PABG_06619"/>
<dbReference type="HOGENOM" id="CLU_008523_11_0_1"/>
<dbReference type="OrthoDB" id="29021at33183"/>
<dbReference type="GO" id="GO:0016020">
    <property type="term" value="C:membrane"/>
    <property type="evidence" value="ECO:0007669"/>
    <property type="project" value="UniProtKB-KW"/>
</dbReference>
<dbReference type="GO" id="GO:0005802">
    <property type="term" value="C:trans-Golgi network"/>
    <property type="evidence" value="ECO:0007669"/>
    <property type="project" value="TreeGrafter"/>
</dbReference>
<dbReference type="GO" id="GO:0004185">
    <property type="term" value="F:serine-type carboxypeptidase activity"/>
    <property type="evidence" value="ECO:0007669"/>
    <property type="project" value="UniProtKB-EC"/>
</dbReference>
<dbReference type="GO" id="GO:0006915">
    <property type="term" value="P:apoptotic process"/>
    <property type="evidence" value="ECO:0007669"/>
    <property type="project" value="UniProtKB-KW"/>
</dbReference>
<dbReference type="GO" id="GO:0006508">
    <property type="term" value="P:proteolysis"/>
    <property type="evidence" value="ECO:0007669"/>
    <property type="project" value="UniProtKB-KW"/>
</dbReference>
<dbReference type="FunFam" id="3.40.50.1820:FF:000121">
    <property type="entry name" value="Carboxypeptidase D"/>
    <property type="match status" value="1"/>
</dbReference>
<dbReference type="Gene3D" id="3.40.50.1820">
    <property type="entry name" value="alpha/beta hydrolase"/>
    <property type="match status" value="1"/>
</dbReference>
<dbReference type="InterPro" id="IPR029058">
    <property type="entry name" value="AB_hydrolase_fold"/>
</dbReference>
<dbReference type="InterPro" id="IPR001563">
    <property type="entry name" value="Peptidase_S10"/>
</dbReference>
<dbReference type="PANTHER" id="PTHR11802:SF190">
    <property type="entry name" value="PHEROMONE-PROCESSING CARBOXYPEPTIDASE KEX1"/>
    <property type="match status" value="1"/>
</dbReference>
<dbReference type="PANTHER" id="PTHR11802">
    <property type="entry name" value="SERINE PROTEASE FAMILY S10 SERINE CARBOXYPEPTIDASE"/>
    <property type="match status" value="1"/>
</dbReference>
<dbReference type="Pfam" id="PF00450">
    <property type="entry name" value="Peptidase_S10"/>
    <property type="match status" value="1"/>
</dbReference>
<dbReference type="PRINTS" id="PR00724">
    <property type="entry name" value="CRBOXYPTASEC"/>
</dbReference>
<dbReference type="SUPFAM" id="SSF53474">
    <property type="entry name" value="alpha/beta-Hydrolases"/>
    <property type="match status" value="1"/>
</dbReference>
<protein>
    <recommendedName>
        <fullName>Pheromone-processing carboxypeptidase KEX1</fullName>
        <ecNumber>3.4.16.6</ecNumber>
    </recommendedName>
    <alternativeName>
        <fullName>Carboxypeptidase D</fullName>
    </alternativeName>
</protein>
<sequence length="635" mass="71017">MGFSGSRAWSKWLTICLAITHPFSVTAKSAADYYVHSLPGQPEGPLLKMHAGHIEISPETSGNLFFWHFENRHIADKPRTVVWLNGGPGCSSEDGALMEIGPYRLIDKETLNYTEGSWDEFANLLFVDQPVGTGFSYGSTEHYVHELDEMASQFVTFLEKWFEIFPHYEPDDLYFAGESYAGQYIPYIARAVLDRNKKQDVQANNRIWNLKGLLIGNGWISPQHQYPAYLPYVYQEGVVQAGTQEANLIEAKAAKCMKELNVEDTTGTVHIPDCEDILQAILDYTHKGKRCINMYDIRLTDDYSACGMNWPPDLRDIQPYLRRKDVVKALHINEEKQTGWTECAGAVGSSLKARNSKPAVELLPGLLEEGLPILLFSGQKDLICNHVGTEDMIKNMKWSGGTGFELSPGVWAPRQDWTFEGEPAGIYQQARNLTYVLFYNASHMVPFDYPRRSRDMLDKFLGVDITHIGGDPADSRIDGEKGPTTSVGAHPNSTAAAEREKEKLNTAAWKAYYKSGEVALVIVAIAAFAWGIFIWRSRRKHQSSGYRSIYPMLGLNSTGSLGQISHKHSRRNGDIEAADFDETELDDQPSQAFLSRSSRDGDAYAVGEESSDEEDGASDGQQPMFDQSRGEEGRS</sequence>
<accession>C0SGJ2</accession>
<comment type="function">
    <text evidence="1">Protease with a carboxypeptidase B-like function involved in the C-terminal processing of the lysine and arginine residues from protein precursors. Promotes cell fusion and is involved in the programmed cell death (By similarity).</text>
</comment>
<comment type="catalytic activity">
    <reaction>
        <text>Preferential release of a C-terminal arginine or lysine residue.</text>
        <dbReference type="EC" id="3.4.16.6"/>
    </reaction>
</comment>
<comment type="subcellular location">
    <subcellularLocation>
        <location evidence="1">Golgi apparatus</location>
        <location evidence="1">trans-Golgi network membrane</location>
        <topology evidence="1">Single-pass type I membrane protein</topology>
    </subcellularLocation>
</comment>
<comment type="similarity">
    <text evidence="4">Belongs to the peptidase S10 family.</text>
</comment>
<organism>
    <name type="scientific">Paracoccidioides brasiliensis (strain Pb03)</name>
    <dbReference type="NCBI Taxonomy" id="482561"/>
    <lineage>
        <taxon>Eukaryota</taxon>
        <taxon>Fungi</taxon>
        <taxon>Dikarya</taxon>
        <taxon>Ascomycota</taxon>
        <taxon>Pezizomycotina</taxon>
        <taxon>Eurotiomycetes</taxon>
        <taxon>Eurotiomycetidae</taxon>
        <taxon>Onygenales</taxon>
        <taxon>Ajellomycetaceae</taxon>
        <taxon>Paracoccidioides</taxon>
    </lineage>
</organism>
<gene>
    <name type="primary">KEX1</name>
    <name type="ORF">PABG_06619</name>
</gene>
<reference key="1">
    <citation type="journal article" date="2011" name="PLoS Genet.">
        <title>Comparative genomic analysis of human fungal pathogens causing paracoccidioidomycosis.</title>
        <authorList>
            <person name="Desjardins C.A."/>
            <person name="Champion M.D."/>
            <person name="Holder J.W."/>
            <person name="Muszewska A."/>
            <person name="Goldberg J."/>
            <person name="Bailao A.M."/>
            <person name="Brigido M.M."/>
            <person name="Ferreira M.E."/>
            <person name="Garcia A.M."/>
            <person name="Grynberg M."/>
            <person name="Gujja S."/>
            <person name="Heiman D.I."/>
            <person name="Henn M.R."/>
            <person name="Kodira C.D."/>
            <person name="Leon-Narvaez H."/>
            <person name="Longo L.V.G."/>
            <person name="Ma L.-J."/>
            <person name="Malavazi I."/>
            <person name="Matsuo A.L."/>
            <person name="Morais F.V."/>
            <person name="Pereira M."/>
            <person name="Rodriguez-Brito S."/>
            <person name="Sakthikumar S."/>
            <person name="Salem-Izacc S.M."/>
            <person name="Sykes S.M."/>
            <person name="Teixeira M.M."/>
            <person name="Vallejo M.C."/>
            <person name="Walter M.E."/>
            <person name="Yandava C."/>
            <person name="Young S."/>
            <person name="Zeng Q."/>
            <person name="Zucker J."/>
            <person name="Felipe M.S."/>
            <person name="Goldman G.H."/>
            <person name="Haas B.J."/>
            <person name="McEwen J.G."/>
            <person name="Nino-Vega G."/>
            <person name="Puccia R."/>
            <person name="San-Blas G."/>
            <person name="Soares C.M."/>
            <person name="Birren B.W."/>
            <person name="Cuomo C.A."/>
        </authorList>
    </citation>
    <scope>NUCLEOTIDE SEQUENCE [LARGE SCALE GENOMIC DNA]</scope>
    <source>
        <strain>Pb03</strain>
    </source>
</reference>
<evidence type="ECO:0000250" key="1"/>
<evidence type="ECO:0000255" key="2"/>
<evidence type="ECO:0000256" key="3">
    <source>
        <dbReference type="SAM" id="MobiDB-lite"/>
    </source>
</evidence>
<evidence type="ECO:0000305" key="4"/>
<feature type="signal peptide" evidence="2">
    <location>
        <begin position="1"/>
        <end position="27"/>
    </location>
</feature>
<feature type="chain" id="PRO_0000411933" description="Pheromone-processing carboxypeptidase KEX1">
    <location>
        <begin position="28"/>
        <end position="635"/>
    </location>
</feature>
<feature type="topological domain" description="Lumenal" evidence="2">
    <location>
        <begin position="28"/>
        <end position="514"/>
    </location>
</feature>
<feature type="transmembrane region" description="Helical" evidence="2">
    <location>
        <begin position="515"/>
        <end position="535"/>
    </location>
</feature>
<feature type="topological domain" description="Cytoplasmic" evidence="2">
    <location>
        <begin position="536"/>
        <end position="635"/>
    </location>
</feature>
<feature type="region of interest" description="Disordered" evidence="3">
    <location>
        <begin position="472"/>
        <end position="500"/>
    </location>
</feature>
<feature type="region of interest" description="Disordered" evidence="3">
    <location>
        <begin position="579"/>
        <end position="635"/>
    </location>
</feature>
<feature type="compositionally biased region" description="Polar residues" evidence="3">
    <location>
        <begin position="483"/>
        <end position="495"/>
    </location>
</feature>
<feature type="active site" evidence="1">
    <location>
        <position position="179"/>
    </location>
</feature>
<feature type="active site" evidence="1">
    <location>
        <position position="381"/>
    </location>
</feature>
<feature type="active site" evidence="1">
    <location>
        <position position="443"/>
    </location>
</feature>
<feature type="glycosylation site" description="N-linked (GlcNAc...) asparagine" evidence="2">
    <location>
        <position position="112"/>
    </location>
</feature>
<feature type="glycosylation site" description="N-linked (GlcNAc...) asparagine" evidence="2">
    <location>
        <position position="432"/>
    </location>
</feature>
<feature type="glycosylation site" description="N-linked (GlcNAc...) asparagine" evidence="2">
    <location>
        <position position="440"/>
    </location>
</feature>
<feature type="glycosylation site" description="N-linked (GlcNAc...) asparagine" evidence="2">
    <location>
        <position position="492"/>
    </location>
</feature>
<name>KEX1_PARBP</name>
<proteinExistence type="inferred from homology"/>